<comment type="function">
    <text evidence="1">Catalyzes the initial step of the lipid cycle reactions in the biosynthesis of the cell wall peptidoglycan: transfers peptidoglycan precursor phospho-MurNAc-pentapeptide from UDP-MurNAc-pentapeptide onto the lipid carrier undecaprenyl phosphate, yielding undecaprenyl-pyrophosphoryl-MurNAc-pentapeptide, known as lipid I.</text>
</comment>
<comment type="catalytic activity">
    <reaction evidence="1">
        <text>UDP-N-acetyl-alpha-D-muramoyl-L-alanyl-gamma-D-glutamyl-meso-2,6-diaminopimeloyl-D-alanyl-D-alanine + di-trans,octa-cis-undecaprenyl phosphate = di-trans,octa-cis-undecaprenyl diphospho-N-acetyl-alpha-D-muramoyl-L-alanyl-D-glutamyl-meso-2,6-diaminopimeloyl-D-alanyl-D-alanine + UMP</text>
        <dbReference type="Rhea" id="RHEA:28386"/>
        <dbReference type="ChEBI" id="CHEBI:57865"/>
        <dbReference type="ChEBI" id="CHEBI:60392"/>
        <dbReference type="ChEBI" id="CHEBI:61386"/>
        <dbReference type="ChEBI" id="CHEBI:61387"/>
        <dbReference type="EC" id="2.7.8.13"/>
    </reaction>
</comment>
<comment type="cofactor">
    <cofactor evidence="1">
        <name>Mg(2+)</name>
        <dbReference type="ChEBI" id="CHEBI:18420"/>
    </cofactor>
</comment>
<comment type="pathway">
    <text evidence="1">Cell wall biogenesis; peptidoglycan biosynthesis.</text>
</comment>
<comment type="subcellular location">
    <subcellularLocation>
        <location evidence="1">Cell inner membrane</location>
        <topology evidence="1">Multi-pass membrane protein</topology>
    </subcellularLocation>
</comment>
<comment type="similarity">
    <text evidence="1">Belongs to the glycosyltransferase 4 family. MraY subfamily.</text>
</comment>
<proteinExistence type="inferred from homology"/>
<sequence length="360" mass="39875">MLVWLAEHLVKYYSGFNVFSYLTFRAIVSLLTALFISLWMGPRMIAHLQKLSFGQVVRNDGPESHFSKRGTPTMGGIMILTAIVISVLLWAYPSNPYVWCVLVVLVGYGVIGFVDDYRKVVRKDTKGLIARWKYFWMSVIALGVAFALYLAGKDTPATQLVVPFFKDVMPQLGLFYILLAYFVIVGTGNAVNLTDGLDGLAIMPTVFVAGGFALVAWATGNMNFASYLHIPYLRHAGELVIVCTAIVGAGLGFLWFNTYPAQVFMGDVGSLALGGALGIIAVLLRQEFLLVIMGGVFVVETLSVILQVGSFKLRGQRIFRMAPIHHHYELKGWPEPRVIVRFWIISLMLVLIGLATLKVR</sequence>
<evidence type="ECO:0000255" key="1">
    <source>
        <dbReference type="HAMAP-Rule" id="MF_00038"/>
    </source>
</evidence>
<keyword id="KW-0131">Cell cycle</keyword>
<keyword id="KW-0132">Cell division</keyword>
<keyword id="KW-0997">Cell inner membrane</keyword>
<keyword id="KW-1003">Cell membrane</keyword>
<keyword id="KW-0133">Cell shape</keyword>
<keyword id="KW-0961">Cell wall biogenesis/degradation</keyword>
<keyword id="KW-0460">Magnesium</keyword>
<keyword id="KW-0472">Membrane</keyword>
<keyword id="KW-0479">Metal-binding</keyword>
<keyword id="KW-0573">Peptidoglycan synthesis</keyword>
<keyword id="KW-0808">Transferase</keyword>
<keyword id="KW-0812">Transmembrane</keyword>
<keyword id="KW-1133">Transmembrane helix</keyword>
<name>MRAY_ECOSE</name>
<feature type="chain" id="PRO_1000090625" description="Phospho-N-acetylmuramoyl-pentapeptide-transferase">
    <location>
        <begin position="1"/>
        <end position="360"/>
    </location>
</feature>
<feature type="topological domain" description="Periplasmic" evidence="1">
    <location>
        <begin position="1"/>
        <end position="25"/>
    </location>
</feature>
<feature type="transmembrane region" description="Helical" evidence="1">
    <location>
        <begin position="26"/>
        <end position="46"/>
    </location>
</feature>
<feature type="topological domain" description="Cytoplasmic" evidence="1">
    <location>
        <begin position="47"/>
        <end position="71"/>
    </location>
</feature>
<feature type="transmembrane region" description="Helical" evidence="1">
    <location>
        <begin position="72"/>
        <end position="92"/>
    </location>
</feature>
<feature type="topological domain" description="Periplasmic" evidence="1">
    <location>
        <position position="93"/>
    </location>
</feature>
<feature type="transmembrane region" description="Helical" evidence="1">
    <location>
        <begin position="94"/>
        <end position="114"/>
    </location>
</feature>
<feature type="topological domain" description="Cytoplasmic" evidence="1">
    <location>
        <begin position="115"/>
        <end position="131"/>
    </location>
</feature>
<feature type="transmembrane region" description="Helical" evidence="1">
    <location>
        <begin position="132"/>
        <end position="152"/>
    </location>
</feature>
<feature type="topological domain" description="Periplasmic" evidence="1">
    <location>
        <begin position="153"/>
        <end position="167"/>
    </location>
</feature>
<feature type="transmembrane region" description="Helical" evidence="1">
    <location>
        <begin position="168"/>
        <end position="188"/>
    </location>
</feature>
<feature type="topological domain" description="Cytoplasmic" evidence="1">
    <location>
        <begin position="189"/>
        <end position="198"/>
    </location>
</feature>
<feature type="transmembrane region" description="Helical" evidence="1">
    <location>
        <begin position="199"/>
        <end position="219"/>
    </location>
</feature>
<feature type="topological domain" description="Periplasmic" evidence="1">
    <location>
        <begin position="220"/>
        <end position="235"/>
    </location>
</feature>
<feature type="transmembrane region" description="Helical" evidence="1">
    <location>
        <begin position="236"/>
        <end position="256"/>
    </location>
</feature>
<feature type="topological domain" description="Cytoplasmic" evidence="1">
    <location>
        <begin position="257"/>
        <end position="262"/>
    </location>
</feature>
<feature type="transmembrane region" description="Helical" evidence="1">
    <location>
        <begin position="263"/>
        <end position="283"/>
    </location>
</feature>
<feature type="topological domain" description="Periplasmic" evidence="1">
    <location>
        <begin position="284"/>
        <end position="287"/>
    </location>
</feature>
<feature type="transmembrane region" description="Helical" evidence="1">
    <location>
        <begin position="288"/>
        <end position="308"/>
    </location>
</feature>
<feature type="topological domain" description="Cytoplasmic" evidence="1">
    <location>
        <begin position="309"/>
        <end position="337"/>
    </location>
</feature>
<feature type="transmembrane region" description="Helical" evidence="1">
    <location>
        <begin position="338"/>
        <end position="358"/>
    </location>
</feature>
<feature type="topological domain" description="Periplasmic" evidence="1">
    <location>
        <begin position="359"/>
        <end position="360"/>
    </location>
</feature>
<organism>
    <name type="scientific">Escherichia coli (strain SE11)</name>
    <dbReference type="NCBI Taxonomy" id="409438"/>
    <lineage>
        <taxon>Bacteria</taxon>
        <taxon>Pseudomonadati</taxon>
        <taxon>Pseudomonadota</taxon>
        <taxon>Gammaproteobacteria</taxon>
        <taxon>Enterobacterales</taxon>
        <taxon>Enterobacteriaceae</taxon>
        <taxon>Escherichia</taxon>
    </lineage>
</organism>
<reference key="1">
    <citation type="journal article" date="2008" name="DNA Res.">
        <title>Complete genome sequence and comparative analysis of the wild-type commensal Escherichia coli strain SE11 isolated from a healthy adult.</title>
        <authorList>
            <person name="Oshima K."/>
            <person name="Toh H."/>
            <person name="Ogura Y."/>
            <person name="Sasamoto H."/>
            <person name="Morita H."/>
            <person name="Park S.-H."/>
            <person name="Ooka T."/>
            <person name="Iyoda S."/>
            <person name="Taylor T.D."/>
            <person name="Hayashi T."/>
            <person name="Itoh K."/>
            <person name="Hattori M."/>
        </authorList>
    </citation>
    <scope>NUCLEOTIDE SEQUENCE [LARGE SCALE GENOMIC DNA]</scope>
    <source>
        <strain>SE11</strain>
    </source>
</reference>
<accession>B6HZ64</accession>
<protein>
    <recommendedName>
        <fullName evidence="1">Phospho-N-acetylmuramoyl-pentapeptide-transferase</fullName>
        <ecNumber evidence="1">2.7.8.13</ecNumber>
    </recommendedName>
    <alternativeName>
        <fullName evidence="1">UDP-MurNAc-pentapeptide phosphotransferase</fullName>
    </alternativeName>
</protein>
<gene>
    <name evidence="1" type="primary">mraY</name>
    <name type="ordered locus">ECSE_0089</name>
</gene>
<dbReference type="EC" id="2.7.8.13" evidence="1"/>
<dbReference type="EMBL" id="AP009240">
    <property type="protein sequence ID" value="BAG75613.1"/>
    <property type="molecule type" value="Genomic_DNA"/>
</dbReference>
<dbReference type="RefSeq" id="WP_000964131.1">
    <property type="nucleotide sequence ID" value="NC_011415.1"/>
</dbReference>
<dbReference type="SMR" id="B6HZ64"/>
<dbReference type="GeneID" id="93777347"/>
<dbReference type="KEGG" id="ecy:ECSE_0089"/>
<dbReference type="HOGENOM" id="CLU_023982_0_0_6"/>
<dbReference type="UniPathway" id="UPA00219"/>
<dbReference type="Proteomes" id="UP000008199">
    <property type="component" value="Chromosome"/>
</dbReference>
<dbReference type="GO" id="GO:0005886">
    <property type="term" value="C:plasma membrane"/>
    <property type="evidence" value="ECO:0007669"/>
    <property type="project" value="UniProtKB-SubCell"/>
</dbReference>
<dbReference type="GO" id="GO:0046872">
    <property type="term" value="F:metal ion binding"/>
    <property type="evidence" value="ECO:0007669"/>
    <property type="project" value="UniProtKB-KW"/>
</dbReference>
<dbReference type="GO" id="GO:0008963">
    <property type="term" value="F:phospho-N-acetylmuramoyl-pentapeptide-transferase activity"/>
    <property type="evidence" value="ECO:0007669"/>
    <property type="project" value="UniProtKB-UniRule"/>
</dbReference>
<dbReference type="GO" id="GO:0051992">
    <property type="term" value="F:UDP-N-acetylmuramoyl-L-alanyl-D-glutamyl-meso-2,6-diaminopimelyl-D-alanyl-D-alanine:undecaprenyl-phosphate transferase activity"/>
    <property type="evidence" value="ECO:0007669"/>
    <property type="project" value="RHEA"/>
</dbReference>
<dbReference type="GO" id="GO:0051301">
    <property type="term" value="P:cell division"/>
    <property type="evidence" value="ECO:0007669"/>
    <property type="project" value="UniProtKB-KW"/>
</dbReference>
<dbReference type="GO" id="GO:0071555">
    <property type="term" value="P:cell wall organization"/>
    <property type="evidence" value="ECO:0007669"/>
    <property type="project" value="UniProtKB-KW"/>
</dbReference>
<dbReference type="GO" id="GO:0009252">
    <property type="term" value="P:peptidoglycan biosynthetic process"/>
    <property type="evidence" value="ECO:0007669"/>
    <property type="project" value="UniProtKB-UniRule"/>
</dbReference>
<dbReference type="GO" id="GO:0008360">
    <property type="term" value="P:regulation of cell shape"/>
    <property type="evidence" value="ECO:0007669"/>
    <property type="project" value="UniProtKB-KW"/>
</dbReference>
<dbReference type="CDD" id="cd06852">
    <property type="entry name" value="GT_MraY"/>
    <property type="match status" value="1"/>
</dbReference>
<dbReference type="HAMAP" id="MF_00038">
    <property type="entry name" value="MraY"/>
    <property type="match status" value="1"/>
</dbReference>
<dbReference type="InterPro" id="IPR000715">
    <property type="entry name" value="Glycosyl_transferase_4"/>
</dbReference>
<dbReference type="InterPro" id="IPR003524">
    <property type="entry name" value="PNAcMuramoyl-5peptid_Trfase"/>
</dbReference>
<dbReference type="InterPro" id="IPR018480">
    <property type="entry name" value="PNAcMuramoyl-5peptid_Trfase_CS"/>
</dbReference>
<dbReference type="NCBIfam" id="TIGR00445">
    <property type="entry name" value="mraY"/>
    <property type="match status" value="1"/>
</dbReference>
<dbReference type="PANTHER" id="PTHR22926">
    <property type="entry name" value="PHOSPHO-N-ACETYLMURAMOYL-PENTAPEPTIDE-TRANSFERASE"/>
    <property type="match status" value="1"/>
</dbReference>
<dbReference type="PANTHER" id="PTHR22926:SF5">
    <property type="entry name" value="PHOSPHO-N-ACETYLMURAMOYL-PENTAPEPTIDE-TRANSFERASE HOMOLOG"/>
    <property type="match status" value="1"/>
</dbReference>
<dbReference type="Pfam" id="PF00953">
    <property type="entry name" value="Glycos_transf_4"/>
    <property type="match status" value="1"/>
</dbReference>
<dbReference type="Pfam" id="PF10555">
    <property type="entry name" value="MraY_sig1"/>
    <property type="match status" value="1"/>
</dbReference>
<dbReference type="PROSITE" id="PS01347">
    <property type="entry name" value="MRAY_1"/>
    <property type="match status" value="1"/>
</dbReference>
<dbReference type="PROSITE" id="PS01348">
    <property type="entry name" value="MRAY_2"/>
    <property type="match status" value="1"/>
</dbReference>